<organism>
    <name type="scientific">Shigella flexneri</name>
    <dbReference type="NCBI Taxonomy" id="623"/>
    <lineage>
        <taxon>Bacteria</taxon>
        <taxon>Pseudomonadati</taxon>
        <taxon>Pseudomonadota</taxon>
        <taxon>Gammaproteobacteria</taxon>
        <taxon>Enterobacterales</taxon>
        <taxon>Enterobacteriaceae</taxon>
        <taxon>Shigella</taxon>
    </lineage>
</organism>
<keyword id="KW-0002">3D-structure</keyword>
<keyword id="KW-0186">Copper</keyword>
<keyword id="KW-0378">Hydrolase</keyword>
<keyword id="KW-0479">Metal-binding</keyword>
<keyword id="KW-0560">Oxidoreductase</keyword>
<keyword id="KW-1185">Reference proteome</keyword>
<keyword id="KW-0808">Transferase</keyword>
<keyword id="KW-0862">Zinc</keyword>
<protein>
    <recommendedName>
        <fullName>Purine nucleoside phosphorylase YfiH</fullName>
        <ecNumber evidence="1">2.4.2.1</ecNumber>
    </recommendedName>
    <alternativeName>
        <fullName>Adenosine deaminase YfiH</fullName>
        <ecNumber evidence="1">3.5.4.4</ecNumber>
    </alternativeName>
    <alternativeName>
        <fullName>S-methyl-5'-thioadenosine phosphorylase YfiH</fullName>
        <ecNumber evidence="1">2.4.2.28</ecNumber>
    </alternativeName>
</protein>
<name>PURNU_SHIFL</name>
<gene>
    <name type="primary">yfiH</name>
    <name type="ordered locus">SF2654</name>
</gene>
<proteinExistence type="evidence at protein level"/>
<sequence length="243" mass="26380">MSKLIVPQWPLPKGVAACSSTRIGGVSLPPYDSLNLGAHCGDNPDHVEENRKRLFAAGNLPSKPVWLEQVHGKDVLKLTGEPYASKRADASYSNTPGTVCAVMTADCLPVLFCNRAGTEVAAVHAGWRGLCAGVLEETVSCFADKPENILAWLGPAIGPRAFEVGAEVREAFMAVDAKASAAFIQHGDKYLADIYQLARQRLANVGVEQIFGGDRCTYTENETFFSYRRDKTTGRMASFIWLI</sequence>
<dbReference type="EC" id="2.4.2.1" evidence="1"/>
<dbReference type="EC" id="3.5.4.4" evidence="1"/>
<dbReference type="EC" id="2.4.2.28" evidence="1"/>
<dbReference type="EMBL" id="AE005674">
    <property type="protein sequence ID" value="AAN44150.1"/>
    <property type="molecule type" value="Genomic_DNA"/>
</dbReference>
<dbReference type="RefSeq" id="NP_708443.1">
    <property type="nucleotide sequence ID" value="NC_004337.2"/>
</dbReference>
<dbReference type="RefSeq" id="WP_000040142.1">
    <property type="nucleotide sequence ID" value="NZ_WPGW01000198.1"/>
</dbReference>
<dbReference type="PDB" id="1U05">
    <property type="method" value="X-ray"/>
    <property type="resolution" value="2.50 A"/>
    <property type="chains" value="A/B=1-243"/>
</dbReference>
<dbReference type="PDB" id="1XAF">
    <property type="method" value="X-ray"/>
    <property type="resolution" value="2.01 A"/>
    <property type="chains" value="A/B=1-243"/>
</dbReference>
<dbReference type="PDBsum" id="1U05"/>
<dbReference type="PDBsum" id="1XAF"/>
<dbReference type="SMR" id="A0A384KG77"/>
<dbReference type="PaxDb" id="198214-SF2654"/>
<dbReference type="GeneID" id="1027284"/>
<dbReference type="GeneID" id="93774493"/>
<dbReference type="KEGG" id="sfl:SF2654"/>
<dbReference type="PATRIC" id="fig|198214.7.peg.3163"/>
<dbReference type="HOGENOM" id="CLU_065784_1_1_6"/>
<dbReference type="OMA" id="GWKGALT"/>
<dbReference type="EvolutionaryTrace" id="A0A384KG77"/>
<dbReference type="Proteomes" id="UP000001006">
    <property type="component" value="Chromosome"/>
</dbReference>
<dbReference type="GO" id="GO:0004000">
    <property type="term" value="F:adenosine deaminase activity"/>
    <property type="evidence" value="ECO:0007669"/>
    <property type="project" value="RHEA"/>
</dbReference>
<dbReference type="GO" id="GO:0005507">
    <property type="term" value="F:copper ion binding"/>
    <property type="evidence" value="ECO:0007669"/>
    <property type="project" value="TreeGrafter"/>
</dbReference>
<dbReference type="GO" id="GO:0016491">
    <property type="term" value="F:oxidoreductase activity"/>
    <property type="evidence" value="ECO:0007669"/>
    <property type="project" value="UniProtKB-KW"/>
</dbReference>
<dbReference type="GO" id="GO:0017061">
    <property type="term" value="F:S-methyl-5-thioadenosine phosphorylase activity"/>
    <property type="evidence" value="ECO:0007669"/>
    <property type="project" value="UniProtKB-EC"/>
</dbReference>
<dbReference type="CDD" id="cd16833">
    <property type="entry name" value="YfiH"/>
    <property type="match status" value="1"/>
</dbReference>
<dbReference type="FunFam" id="3.60.140.10:FF:000001">
    <property type="entry name" value="Polyphenol oxidase"/>
    <property type="match status" value="1"/>
</dbReference>
<dbReference type="Gene3D" id="3.60.140.10">
    <property type="entry name" value="CNF1/YfiH-like putative cysteine hydrolases"/>
    <property type="match status" value="1"/>
</dbReference>
<dbReference type="InterPro" id="IPR003730">
    <property type="entry name" value="Cu_polyphenol_OxRdtase"/>
</dbReference>
<dbReference type="InterPro" id="IPR038371">
    <property type="entry name" value="Cu_polyphenol_OxRdtase_sf"/>
</dbReference>
<dbReference type="InterPro" id="IPR011324">
    <property type="entry name" value="Cytotoxic_necrot_fac-like_cat"/>
</dbReference>
<dbReference type="NCBIfam" id="TIGR00726">
    <property type="entry name" value="peptidoglycan editing factor PgeF"/>
    <property type="match status" value="1"/>
</dbReference>
<dbReference type="NCBIfam" id="NF007998">
    <property type="entry name" value="PRK10723.1"/>
    <property type="match status" value="1"/>
</dbReference>
<dbReference type="PANTHER" id="PTHR30616:SF2">
    <property type="entry name" value="PURINE NUCLEOSIDE PHOSPHORYLASE LACC1"/>
    <property type="match status" value="1"/>
</dbReference>
<dbReference type="PANTHER" id="PTHR30616">
    <property type="entry name" value="UNCHARACTERIZED PROTEIN YFIH"/>
    <property type="match status" value="1"/>
</dbReference>
<dbReference type="Pfam" id="PF02578">
    <property type="entry name" value="Cu-oxidase_4"/>
    <property type="match status" value="1"/>
</dbReference>
<dbReference type="SUPFAM" id="SSF64438">
    <property type="entry name" value="CNF1/YfiH-like putative cysteine hydrolases"/>
    <property type="match status" value="1"/>
</dbReference>
<evidence type="ECO:0000250" key="1">
    <source>
        <dbReference type="UniProtKB" id="P84138"/>
    </source>
</evidence>
<evidence type="ECO:0000269" key="2">
    <source>
    </source>
</evidence>
<evidence type="ECO:0000269" key="3">
    <source ref="2"/>
</evidence>
<evidence type="ECO:0000305" key="4"/>
<evidence type="ECO:0007744" key="5">
    <source>
        <dbReference type="PDB" id="1U05"/>
    </source>
</evidence>
<evidence type="ECO:0007744" key="6">
    <source>
        <dbReference type="PDB" id="1XAF"/>
    </source>
</evidence>
<evidence type="ECO:0007829" key="7">
    <source>
        <dbReference type="PDB" id="1U05"/>
    </source>
</evidence>
<evidence type="ECO:0007829" key="8">
    <source>
        <dbReference type="PDB" id="1XAF"/>
    </source>
</evidence>
<comment type="function">
    <text evidence="1">Purine nucleoside enzyme that catalyzes the phosphorolysis of adenosine and inosine nucleosides, yielding D-ribose 1-phosphate and the respective free bases, adenine and hypoxanthine. Also catalyzes the phosphorolysis of S-methyl-5'-thioadenosine into adenine and S-methyl-5-thio-alpha-D-ribose 1-phosphate. Also has adenosine deaminase activity.</text>
</comment>
<comment type="catalytic activity">
    <reaction evidence="1">
        <text>adenosine + phosphate = alpha-D-ribose 1-phosphate + adenine</text>
        <dbReference type="Rhea" id="RHEA:27642"/>
        <dbReference type="ChEBI" id="CHEBI:16335"/>
        <dbReference type="ChEBI" id="CHEBI:16708"/>
        <dbReference type="ChEBI" id="CHEBI:43474"/>
        <dbReference type="ChEBI" id="CHEBI:57720"/>
        <dbReference type="EC" id="2.4.2.1"/>
    </reaction>
    <physiologicalReaction direction="left-to-right" evidence="1">
        <dbReference type="Rhea" id="RHEA:27643"/>
    </physiologicalReaction>
</comment>
<comment type="catalytic activity">
    <reaction evidence="1">
        <text>S-methyl-5'-thioadenosine + phosphate = 5-(methylsulfanyl)-alpha-D-ribose 1-phosphate + adenine</text>
        <dbReference type="Rhea" id="RHEA:11852"/>
        <dbReference type="ChEBI" id="CHEBI:16708"/>
        <dbReference type="ChEBI" id="CHEBI:17509"/>
        <dbReference type="ChEBI" id="CHEBI:43474"/>
        <dbReference type="ChEBI" id="CHEBI:58533"/>
        <dbReference type="EC" id="2.4.2.28"/>
    </reaction>
    <physiologicalReaction direction="left-to-right" evidence="1">
        <dbReference type="Rhea" id="RHEA:11853"/>
    </physiologicalReaction>
</comment>
<comment type="catalytic activity">
    <reaction evidence="1">
        <text>inosine + phosphate = alpha-D-ribose 1-phosphate + hypoxanthine</text>
        <dbReference type="Rhea" id="RHEA:27646"/>
        <dbReference type="ChEBI" id="CHEBI:17368"/>
        <dbReference type="ChEBI" id="CHEBI:17596"/>
        <dbReference type="ChEBI" id="CHEBI:43474"/>
        <dbReference type="ChEBI" id="CHEBI:57720"/>
        <dbReference type="EC" id="2.4.2.1"/>
    </reaction>
    <physiologicalReaction direction="left-to-right" evidence="1">
        <dbReference type="Rhea" id="RHEA:27647"/>
    </physiologicalReaction>
</comment>
<comment type="catalytic activity">
    <reaction evidence="1">
        <text>adenosine + H2O + H(+) = inosine + NH4(+)</text>
        <dbReference type="Rhea" id="RHEA:24408"/>
        <dbReference type="ChEBI" id="CHEBI:15377"/>
        <dbReference type="ChEBI" id="CHEBI:15378"/>
        <dbReference type="ChEBI" id="CHEBI:16335"/>
        <dbReference type="ChEBI" id="CHEBI:17596"/>
        <dbReference type="ChEBI" id="CHEBI:28938"/>
        <dbReference type="EC" id="3.5.4.4"/>
    </reaction>
    <physiologicalReaction direction="left-to-right" evidence="1">
        <dbReference type="Rhea" id="RHEA:24409"/>
    </physiologicalReaction>
</comment>
<comment type="cofactor">
    <cofactor evidence="1">
        <name>Zn(2+)</name>
        <dbReference type="ChEBI" id="CHEBI:29105"/>
    </cofactor>
</comment>
<comment type="similarity">
    <text evidence="4">Belongs to the purine nucleoside phosphorylase YfiH/LACC1 family.</text>
</comment>
<feature type="chain" id="PRO_0000449803" description="Purine nucleoside phosphorylase YfiH">
    <location>
        <begin position="1"/>
        <end position="243"/>
    </location>
</feature>
<feature type="binding site" evidence="2 3 5 6">
    <location>
        <position position="71"/>
    </location>
    <ligand>
        <name>Zn(2+)</name>
        <dbReference type="ChEBI" id="CHEBI:29105"/>
        <note>catalytic</note>
    </ligand>
</feature>
<feature type="binding site" evidence="2 3 5 6">
    <location>
        <position position="107"/>
    </location>
    <ligand>
        <name>Zn(2+)</name>
        <dbReference type="ChEBI" id="CHEBI:29105"/>
        <note>catalytic</note>
    </ligand>
</feature>
<feature type="binding site" evidence="2 3 5 6">
    <location>
        <position position="124"/>
    </location>
    <ligand>
        <name>Zn(2+)</name>
        <dbReference type="ChEBI" id="CHEBI:29105"/>
        <note>catalytic</note>
    </ligand>
</feature>
<feature type="strand" evidence="8">
    <location>
        <begin position="15"/>
        <end position="20"/>
    </location>
</feature>
<feature type="turn" evidence="8">
    <location>
        <begin position="32"/>
        <end position="34"/>
    </location>
</feature>
<feature type="strand" evidence="7">
    <location>
        <begin position="38"/>
        <end position="41"/>
    </location>
</feature>
<feature type="helix" evidence="8">
    <location>
        <begin position="44"/>
        <end position="58"/>
    </location>
</feature>
<feature type="strand" evidence="8">
    <location>
        <begin position="75"/>
        <end position="77"/>
    </location>
</feature>
<feature type="strand" evidence="8">
    <location>
        <begin position="89"/>
        <end position="93"/>
    </location>
</feature>
<feature type="strand" evidence="8">
    <location>
        <begin position="99"/>
        <end position="114"/>
    </location>
</feature>
<feature type="strand" evidence="8">
    <location>
        <begin position="120"/>
        <end position="125"/>
    </location>
</feature>
<feature type="helix" evidence="8">
    <location>
        <begin position="127"/>
        <end position="131"/>
    </location>
</feature>
<feature type="helix" evidence="8">
    <location>
        <begin position="134"/>
        <end position="139"/>
    </location>
</feature>
<feature type="helix" evidence="8">
    <location>
        <begin position="146"/>
        <end position="148"/>
    </location>
</feature>
<feature type="strand" evidence="8">
    <location>
        <begin position="149"/>
        <end position="153"/>
    </location>
</feature>
<feature type="turn" evidence="8">
    <location>
        <begin position="159"/>
        <end position="161"/>
    </location>
</feature>
<feature type="strand" evidence="8">
    <location>
        <begin position="163"/>
        <end position="165"/>
    </location>
</feature>
<feature type="helix" evidence="8">
    <location>
        <begin position="166"/>
        <end position="175"/>
    </location>
</feature>
<feature type="helix" evidence="8">
    <location>
        <begin position="177"/>
        <end position="182"/>
    </location>
</feature>
<feature type="strand" evidence="8">
    <location>
        <begin position="183"/>
        <end position="185"/>
    </location>
</feature>
<feature type="strand" evidence="8">
    <location>
        <begin position="187"/>
        <end position="192"/>
    </location>
</feature>
<feature type="helix" evidence="8">
    <location>
        <begin position="194"/>
        <end position="205"/>
    </location>
</feature>
<feature type="strand" evidence="8">
    <location>
        <begin position="209"/>
        <end position="212"/>
    </location>
</feature>
<feature type="turn" evidence="8">
    <location>
        <begin position="217"/>
        <end position="219"/>
    </location>
</feature>
<feature type="turn" evidence="8">
    <location>
        <begin position="221"/>
        <end position="223"/>
    </location>
</feature>
<feature type="helix" evidence="8">
    <location>
        <begin position="227"/>
        <end position="230"/>
    </location>
</feature>
<feature type="strand" evidence="8">
    <location>
        <begin position="236"/>
        <end position="242"/>
    </location>
</feature>
<reference key="1">
    <citation type="journal article" date="2002" name="Nucleic Acids Res.">
        <title>Genome sequence of Shigella flexneri 2a: insights into pathogenicity through comparison with genomes of Escherichia coli K12 and O157.</title>
        <authorList>
            <person name="Jin Q."/>
            <person name="Yuan Z."/>
            <person name="Xu J."/>
            <person name="Wang Y."/>
            <person name="Shen Y."/>
            <person name="Lu W."/>
            <person name="Wang J."/>
            <person name="Liu H."/>
            <person name="Yang J."/>
            <person name="Yang F."/>
            <person name="Zhang X."/>
            <person name="Zhang J."/>
            <person name="Yang G."/>
            <person name="Wu H."/>
            <person name="Qu D."/>
            <person name="Dong J."/>
            <person name="Sun L."/>
            <person name="Xue Y."/>
            <person name="Zhao A."/>
            <person name="Gao Y."/>
            <person name="Zhu J."/>
            <person name="Kan B."/>
            <person name="Ding K."/>
            <person name="Chen S."/>
            <person name="Cheng H."/>
            <person name="Yao Z."/>
            <person name="He B."/>
            <person name="Chen R."/>
            <person name="Ma D."/>
            <person name="Qiang B."/>
            <person name="Wen Y."/>
            <person name="Hou Y."/>
            <person name="Yu J."/>
        </authorList>
    </citation>
    <scope>NUCLEOTIDE SEQUENCE [LARGE SCALE GENOMIC DNA]</scope>
    <source>
        <strain>301 / Serotype 2a</strain>
    </source>
</reference>
<reference key="2">
    <citation type="submission" date="2004-07" db="PDB data bank">
        <title>Crystal Structure of Conserved Hypothetical Protein.</title>
        <authorList>
            <person name="Seetharaman J."/>
            <person name="Swaminathan S."/>
        </authorList>
    </citation>
    <scope>X-RAY CRYSTALLOGRAPHY (2.50 ANGSTROMS) IN COMPLEX WITH ZINC</scope>
</reference>
<reference evidence="6" key="3">
    <citation type="journal article" date="2006" name="Proteins">
        <title>Crystal structure of hypothetical protein YfiH from Shigella flexneri at 2 A resolution.</title>
        <authorList>
            <person name="Kim Y."/>
            <person name="Maltseva N."/>
            <person name="Dementieva I."/>
            <person name="Collart F."/>
            <person name="Holzle D."/>
            <person name="Joachimiak A."/>
        </authorList>
    </citation>
    <scope>X-RAY CRYSTALLOGRAPHY (2.01 ANGSTROMS) IN COMPLEX WITH ZINC</scope>
</reference>
<accession>A0A384KG77</accession>
<accession>A0A2S4MZ83</accession>
<accession>Q7C0D7</accession>
<accession>Q83K13</accession>